<name>Y033_BAUCH</name>
<dbReference type="EMBL" id="CP000238">
    <property type="protein sequence ID" value="ABF13855.1"/>
    <property type="molecule type" value="Genomic_DNA"/>
</dbReference>
<dbReference type="RefSeq" id="WP_011520245.1">
    <property type="nucleotide sequence ID" value="NC_007984.1"/>
</dbReference>
<dbReference type="SMR" id="Q1LU52"/>
<dbReference type="KEGG" id="bci:BCI_0033"/>
<dbReference type="HOGENOM" id="CLU_097887_1_1_6"/>
<dbReference type="OrthoDB" id="9783569at2"/>
<dbReference type="Proteomes" id="UP000002427">
    <property type="component" value="Chromosome"/>
</dbReference>
<dbReference type="GO" id="GO:0005886">
    <property type="term" value="C:plasma membrane"/>
    <property type="evidence" value="ECO:0007669"/>
    <property type="project" value="UniProtKB-SubCell"/>
</dbReference>
<dbReference type="HAMAP" id="MF_00143">
    <property type="entry name" value="UPF0114"/>
    <property type="match status" value="1"/>
</dbReference>
<dbReference type="InterPro" id="IPR005134">
    <property type="entry name" value="UPF0114"/>
</dbReference>
<dbReference type="InterPro" id="IPR020761">
    <property type="entry name" value="UPF0114_bac"/>
</dbReference>
<dbReference type="NCBIfam" id="TIGR00645">
    <property type="entry name" value="HI0507"/>
    <property type="match status" value="1"/>
</dbReference>
<dbReference type="PANTHER" id="PTHR38596">
    <property type="entry name" value="UPF0114 PROTEIN YQHA"/>
    <property type="match status" value="1"/>
</dbReference>
<dbReference type="PANTHER" id="PTHR38596:SF1">
    <property type="entry name" value="UPF0114 PROTEIN YQHA"/>
    <property type="match status" value="1"/>
</dbReference>
<dbReference type="Pfam" id="PF03350">
    <property type="entry name" value="UPF0114"/>
    <property type="match status" value="1"/>
</dbReference>
<gene>
    <name type="ordered locus">BCI_0033</name>
</gene>
<feature type="chain" id="PRO_1000009476" description="UPF0114 protein BCI_0033">
    <location>
        <begin position="1"/>
        <end position="164"/>
    </location>
</feature>
<feature type="transmembrane region" description="Helical" evidence="1">
    <location>
        <begin position="15"/>
        <end position="35"/>
    </location>
</feature>
<feature type="transmembrane region" description="Helical" evidence="1">
    <location>
        <begin position="53"/>
        <end position="73"/>
    </location>
</feature>
<feature type="transmembrane region" description="Helical" evidence="1">
    <location>
        <begin position="136"/>
        <end position="156"/>
    </location>
</feature>
<organism>
    <name type="scientific">Baumannia cicadellinicola subsp. Homalodisca coagulata</name>
    <dbReference type="NCBI Taxonomy" id="374463"/>
    <lineage>
        <taxon>Bacteria</taxon>
        <taxon>Pseudomonadati</taxon>
        <taxon>Pseudomonadota</taxon>
        <taxon>Gammaproteobacteria</taxon>
        <taxon>Candidatus Palibaumannia</taxon>
    </lineage>
</organism>
<sequence>MNKIIEKMIYESRWLLFPVYIGLSFGFILLTLKFFHEIIQFLPKIFDMPESDLILIVLSMIDIALVGGLLVMVMFSGYENFILKMSDDCNQKRLNWMGKMDVNSIKNKVASSIVAISSVHLLRIFMEADRTRDNKIMWCVIIHLAFVLSAFGMAYIDKMSKTKS</sequence>
<keyword id="KW-1003">Cell membrane</keyword>
<keyword id="KW-0472">Membrane</keyword>
<keyword id="KW-1185">Reference proteome</keyword>
<keyword id="KW-0812">Transmembrane</keyword>
<keyword id="KW-1133">Transmembrane helix</keyword>
<proteinExistence type="inferred from homology"/>
<comment type="subcellular location">
    <subcellularLocation>
        <location evidence="1">Cell membrane</location>
        <topology evidence="1">Multi-pass membrane protein</topology>
    </subcellularLocation>
</comment>
<comment type="similarity">
    <text evidence="1">Belongs to the UPF0114 family.</text>
</comment>
<evidence type="ECO:0000255" key="1">
    <source>
        <dbReference type="HAMAP-Rule" id="MF_00143"/>
    </source>
</evidence>
<accession>Q1LU52</accession>
<protein>
    <recommendedName>
        <fullName evidence="1">UPF0114 protein BCI_0033</fullName>
    </recommendedName>
</protein>
<reference key="1">
    <citation type="journal article" date="2006" name="PLoS Biol.">
        <title>Metabolic complementarity and genomics of the dual bacterial symbiosis of sharpshooters.</title>
        <authorList>
            <person name="Wu D."/>
            <person name="Daugherty S.C."/>
            <person name="Van Aken S.E."/>
            <person name="Pai G.H."/>
            <person name="Watkins K.L."/>
            <person name="Khouri H."/>
            <person name="Tallon L.J."/>
            <person name="Zaborsky J.M."/>
            <person name="Dunbar H.E."/>
            <person name="Tran P.L."/>
            <person name="Moran N.A."/>
            <person name="Eisen J.A."/>
        </authorList>
    </citation>
    <scope>NUCLEOTIDE SEQUENCE [LARGE SCALE GENOMIC DNA]</scope>
</reference>